<proteinExistence type="inferred from homology"/>
<name>SPEA_SALTI</name>
<evidence type="ECO:0000255" key="1">
    <source>
        <dbReference type="HAMAP-Rule" id="MF_01417"/>
    </source>
</evidence>
<organism>
    <name type="scientific">Salmonella typhi</name>
    <dbReference type="NCBI Taxonomy" id="90370"/>
    <lineage>
        <taxon>Bacteria</taxon>
        <taxon>Pseudomonadati</taxon>
        <taxon>Pseudomonadota</taxon>
        <taxon>Gammaproteobacteria</taxon>
        <taxon>Enterobacterales</taxon>
        <taxon>Enterobacteriaceae</taxon>
        <taxon>Salmonella</taxon>
    </lineage>
</organism>
<protein>
    <recommendedName>
        <fullName evidence="1">Biosynthetic arginine decarboxylase</fullName>
        <shortName evidence="1">ADC</shortName>
        <ecNumber evidence="1">4.1.1.19</ecNumber>
    </recommendedName>
</protein>
<accession>P60658</accession>
<accession>Q8XFQ5</accession>
<comment type="function">
    <text evidence="1">Catalyzes the biosynthesis of agmatine from arginine.</text>
</comment>
<comment type="catalytic activity">
    <reaction evidence="1">
        <text>L-arginine + H(+) = agmatine + CO2</text>
        <dbReference type="Rhea" id="RHEA:17641"/>
        <dbReference type="ChEBI" id="CHEBI:15378"/>
        <dbReference type="ChEBI" id="CHEBI:16526"/>
        <dbReference type="ChEBI" id="CHEBI:32682"/>
        <dbReference type="ChEBI" id="CHEBI:58145"/>
        <dbReference type="EC" id="4.1.1.19"/>
    </reaction>
</comment>
<comment type="cofactor">
    <cofactor evidence="1">
        <name>Mg(2+)</name>
        <dbReference type="ChEBI" id="CHEBI:18420"/>
    </cofactor>
</comment>
<comment type="cofactor">
    <cofactor evidence="1">
        <name>pyridoxal 5'-phosphate</name>
        <dbReference type="ChEBI" id="CHEBI:597326"/>
    </cofactor>
</comment>
<comment type="pathway">
    <text evidence="1">Amine and polyamine biosynthesis; agmatine biosynthesis; agmatine from L-arginine: step 1/1.</text>
</comment>
<comment type="similarity">
    <text evidence="1">Belongs to the Orn/Lys/Arg decarboxylase class-II family. SpeA subfamily.</text>
</comment>
<sequence>MSDDMSMGSPSSAGEQGVLRSMQEVAMSSQEASKMLRTYNIAWWGNNYYDVNELGHISVCPDPDVPEARVDLAKLVKAREAQGQRLPALFCFPQILQHRLRSINAAFKRARESYGYNGDYFLVYPIKVNQHRRVIESLIHSGEPLGLEAGSKAELMAVLAHAGMTRSVIVCNGYKDREYIRLALIGEKMGHKVYLVIEKMSEIAIVLEEAERLNVVPRLGVRARLASQGSGKWQSSGGEKSKFGLAATQVLQLVETLRDAGRLDSLQLLHFHLGSQMANIRDIATGVRESARFYVELHKLGVNIQCFDVGGGLGVDYEGTRSQSDCSVNYGLNEYANNIIWAIGDACEEHGLPHPTVITESGRAVTAHHTVLVSNIIGVERNEYTDPTAPAEDAPRALQNLWETWQEMHKPGTRRSLREWLHDSQMDLHDIHIGYSSGAFSLQERAWAEQLYLSMCHEVQKQLDPQNRAHRPIIDELQERMADKMYVNFSLFQSMPDAWGIDQLFPVLPLEGLDQVPERRAVLLDITCDSDGAIDHYIDGDGIATTMPMPEYDPENPPMLGFFMVGAYQEILGNMHNLFGDTEAVDVFVFPDGSVEVELSDEGDTVADMLQYVQLDPKTLLTHFRDQVKQTDLDDALQQQFLEEFEAGLYGYTYLEDE</sequence>
<reference key="1">
    <citation type="journal article" date="2003" name="J. Bacteriol.">
        <title>Comparative genomics of Salmonella enterica serovar Typhi strains Ty2 and CT18.</title>
        <authorList>
            <person name="Deng W."/>
            <person name="Liou S.-R."/>
            <person name="Plunkett G. III"/>
            <person name="Mayhew G.F."/>
            <person name="Rose D.J."/>
            <person name="Burland V."/>
            <person name="Kodoyianni V."/>
            <person name="Schwartz D.C."/>
            <person name="Blattner F.R."/>
        </authorList>
    </citation>
    <scope>NUCLEOTIDE SEQUENCE [LARGE SCALE GENOMIC DNA]</scope>
    <source>
        <strain>ATCC 700931 / Ty2</strain>
    </source>
</reference>
<reference key="2">
    <citation type="journal article" date="2001" name="Nature">
        <title>Complete genome sequence of a multiple drug resistant Salmonella enterica serovar Typhi CT18.</title>
        <authorList>
            <person name="Parkhill J."/>
            <person name="Dougan G."/>
            <person name="James K.D."/>
            <person name="Thomson N.R."/>
            <person name="Pickard D."/>
            <person name="Wain J."/>
            <person name="Churcher C.M."/>
            <person name="Mungall K.L."/>
            <person name="Bentley S.D."/>
            <person name="Holden M.T.G."/>
            <person name="Sebaihia M."/>
            <person name="Baker S."/>
            <person name="Basham D."/>
            <person name="Brooks K."/>
            <person name="Chillingworth T."/>
            <person name="Connerton P."/>
            <person name="Cronin A."/>
            <person name="Davis P."/>
            <person name="Davies R.M."/>
            <person name="Dowd L."/>
            <person name="White N."/>
            <person name="Farrar J."/>
            <person name="Feltwell T."/>
            <person name="Hamlin N."/>
            <person name="Haque A."/>
            <person name="Hien T.T."/>
            <person name="Holroyd S."/>
            <person name="Jagels K."/>
            <person name="Krogh A."/>
            <person name="Larsen T.S."/>
            <person name="Leather S."/>
            <person name="Moule S."/>
            <person name="O'Gaora P."/>
            <person name="Parry C."/>
            <person name="Quail M.A."/>
            <person name="Rutherford K.M."/>
            <person name="Simmonds M."/>
            <person name="Skelton J."/>
            <person name="Stevens K."/>
            <person name="Whitehead S."/>
            <person name="Barrell B.G."/>
        </authorList>
    </citation>
    <scope>NUCLEOTIDE SEQUENCE [LARGE SCALE GENOMIC DNA]</scope>
    <source>
        <strain>CT18</strain>
    </source>
</reference>
<dbReference type="EC" id="4.1.1.19" evidence="1"/>
<dbReference type="EMBL" id="AL513382">
    <property type="protein sequence ID" value="CAD02911.1"/>
    <property type="molecule type" value="Genomic_DNA"/>
</dbReference>
<dbReference type="EMBL" id="AE014613">
    <property type="protein sequence ID" value="AAO70551.1"/>
    <property type="molecule type" value="Genomic_DNA"/>
</dbReference>
<dbReference type="RefSeq" id="NP_457479.1">
    <property type="nucleotide sequence ID" value="NC_003198.1"/>
</dbReference>
<dbReference type="RefSeq" id="WP_001278580.1">
    <property type="nucleotide sequence ID" value="NZ_WSUR01000049.1"/>
</dbReference>
<dbReference type="SMR" id="P60658"/>
<dbReference type="STRING" id="220341.gene:17587113"/>
<dbReference type="GeneID" id="44981697"/>
<dbReference type="KEGG" id="stt:t2999"/>
<dbReference type="KEGG" id="sty:STY3240"/>
<dbReference type="PATRIC" id="fig|220341.7.peg.3303"/>
<dbReference type="eggNOG" id="COG1166">
    <property type="taxonomic scope" value="Bacteria"/>
</dbReference>
<dbReference type="HOGENOM" id="CLU_027243_1_0_6"/>
<dbReference type="OMA" id="AVEYTQH"/>
<dbReference type="OrthoDB" id="9802658at2"/>
<dbReference type="UniPathway" id="UPA00186">
    <property type="reaction ID" value="UER00284"/>
</dbReference>
<dbReference type="Proteomes" id="UP000000541">
    <property type="component" value="Chromosome"/>
</dbReference>
<dbReference type="Proteomes" id="UP000002670">
    <property type="component" value="Chromosome"/>
</dbReference>
<dbReference type="GO" id="GO:0008792">
    <property type="term" value="F:arginine decarboxylase activity"/>
    <property type="evidence" value="ECO:0007669"/>
    <property type="project" value="UniProtKB-UniRule"/>
</dbReference>
<dbReference type="GO" id="GO:0046872">
    <property type="term" value="F:metal ion binding"/>
    <property type="evidence" value="ECO:0007669"/>
    <property type="project" value="UniProtKB-KW"/>
</dbReference>
<dbReference type="GO" id="GO:0006527">
    <property type="term" value="P:arginine catabolic process"/>
    <property type="evidence" value="ECO:0007669"/>
    <property type="project" value="InterPro"/>
</dbReference>
<dbReference type="GO" id="GO:0033388">
    <property type="term" value="P:putrescine biosynthetic process from arginine"/>
    <property type="evidence" value="ECO:0007669"/>
    <property type="project" value="TreeGrafter"/>
</dbReference>
<dbReference type="GO" id="GO:0008295">
    <property type="term" value="P:spermidine biosynthetic process"/>
    <property type="evidence" value="ECO:0007669"/>
    <property type="project" value="UniProtKB-UniRule"/>
</dbReference>
<dbReference type="CDD" id="cd06830">
    <property type="entry name" value="PLPDE_III_ADC"/>
    <property type="match status" value="1"/>
</dbReference>
<dbReference type="FunFam" id="1.10.287.3440:FF:000001">
    <property type="entry name" value="Biosynthetic arginine decarboxylase"/>
    <property type="match status" value="1"/>
</dbReference>
<dbReference type="FunFam" id="1.20.58.930:FF:000001">
    <property type="entry name" value="Biosynthetic arginine decarboxylase"/>
    <property type="match status" value="1"/>
</dbReference>
<dbReference type="FunFam" id="2.40.37.10:FF:000001">
    <property type="entry name" value="Biosynthetic arginine decarboxylase"/>
    <property type="match status" value="1"/>
</dbReference>
<dbReference type="FunFam" id="3.20.20.10:FF:000001">
    <property type="entry name" value="Biosynthetic arginine decarboxylase"/>
    <property type="match status" value="1"/>
</dbReference>
<dbReference type="Gene3D" id="1.10.287.3440">
    <property type="match status" value="1"/>
</dbReference>
<dbReference type="Gene3D" id="1.20.58.930">
    <property type="match status" value="1"/>
</dbReference>
<dbReference type="Gene3D" id="3.20.20.10">
    <property type="entry name" value="Alanine racemase"/>
    <property type="match status" value="1"/>
</dbReference>
<dbReference type="Gene3D" id="2.40.37.10">
    <property type="entry name" value="Lyase, Ornithine Decarboxylase, Chain A, domain 1"/>
    <property type="match status" value="1"/>
</dbReference>
<dbReference type="HAMAP" id="MF_01417">
    <property type="entry name" value="SpeA"/>
    <property type="match status" value="1"/>
</dbReference>
<dbReference type="InterPro" id="IPR009006">
    <property type="entry name" value="Ala_racemase/Decarboxylase_C"/>
</dbReference>
<dbReference type="InterPro" id="IPR040634">
    <property type="entry name" value="Arg_decarb_HB"/>
</dbReference>
<dbReference type="InterPro" id="IPR041128">
    <property type="entry name" value="Arg_decarbox_C"/>
</dbReference>
<dbReference type="InterPro" id="IPR002985">
    <property type="entry name" value="Arg_decrbxlase"/>
</dbReference>
<dbReference type="InterPro" id="IPR022657">
    <property type="entry name" value="De-COase2_CS"/>
</dbReference>
<dbReference type="InterPro" id="IPR022644">
    <property type="entry name" value="De-COase2_N"/>
</dbReference>
<dbReference type="InterPro" id="IPR022653">
    <property type="entry name" value="De-COase2_pyr-phos_BS"/>
</dbReference>
<dbReference type="InterPro" id="IPR000183">
    <property type="entry name" value="Orn/DAP/Arg_de-COase"/>
</dbReference>
<dbReference type="InterPro" id="IPR029066">
    <property type="entry name" value="PLP-binding_barrel"/>
</dbReference>
<dbReference type="NCBIfam" id="NF003763">
    <property type="entry name" value="PRK05354.1"/>
    <property type="match status" value="1"/>
</dbReference>
<dbReference type="NCBIfam" id="TIGR01273">
    <property type="entry name" value="speA"/>
    <property type="match status" value="1"/>
</dbReference>
<dbReference type="PANTHER" id="PTHR43295">
    <property type="entry name" value="ARGININE DECARBOXYLASE"/>
    <property type="match status" value="1"/>
</dbReference>
<dbReference type="PANTHER" id="PTHR43295:SF9">
    <property type="entry name" value="BIOSYNTHETIC ARGININE DECARBOXYLASE"/>
    <property type="match status" value="1"/>
</dbReference>
<dbReference type="Pfam" id="PF17810">
    <property type="entry name" value="Arg_decarb_HB"/>
    <property type="match status" value="1"/>
</dbReference>
<dbReference type="Pfam" id="PF17944">
    <property type="entry name" value="Arg_decarbox_C"/>
    <property type="match status" value="1"/>
</dbReference>
<dbReference type="Pfam" id="PF02784">
    <property type="entry name" value="Orn_Arg_deC_N"/>
    <property type="match status" value="1"/>
</dbReference>
<dbReference type="PIRSF" id="PIRSF001336">
    <property type="entry name" value="Arg_decrbxlase"/>
    <property type="match status" value="1"/>
</dbReference>
<dbReference type="PRINTS" id="PR01180">
    <property type="entry name" value="ARGDCRBXLASE"/>
</dbReference>
<dbReference type="PRINTS" id="PR01179">
    <property type="entry name" value="ODADCRBXLASE"/>
</dbReference>
<dbReference type="SUPFAM" id="SSF50621">
    <property type="entry name" value="Alanine racemase C-terminal domain-like"/>
    <property type="match status" value="1"/>
</dbReference>
<dbReference type="SUPFAM" id="SSF51419">
    <property type="entry name" value="PLP-binding barrel"/>
    <property type="match status" value="1"/>
</dbReference>
<dbReference type="PROSITE" id="PS00878">
    <property type="entry name" value="ODR_DC_2_1"/>
    <property type="match status" value="1"/>
</dbReference>
<dbReference type="PROSITE" id="PS00879">
    <property type="entry name" value="ODR_DC_2_2"/>
    <property type="match status" value="1"/>
</dbReference>
<gene>
    <name evidence="1" type="primary">speA</name>
    <name type="ordered locus">STY3240</name>
    <name type="ordered locus">t2999</name>
</gene>
<feature type="chain" id="PRO_0000149975" description="Biosynthetic arginine decarboxylase">
    <location>
        <begin position="1"/>
        <end position="658"/>
    </location>
</feature>
<feature type="binding site" evidence="1">
    <location>
        <begin position="307"/>
        <end position="317"/>
    </location>
    <ligand>
        <name>substrate</name>
    </ligand>
</feature>
<feature type="modified residue" description="N6-(pyridoxal phosphate)lysine" evidence="1">
    <location>
        <position position="127"/>
    </location>
</feature>
<keyword id="KW-0210">Decarboxylase</keyword>
<keyword id="KW-0456">Lyase</keyword>
<keyword id="KW-0460">Magnesium</keyword>
<keyword id="KW-0479">Metal-binding</keyword>
<keyword id="KW-0620">Polyamine biosynthesis</keyword>
<keyword id="KW-0661">Putrescine biosynthesis</keyword>
<keyword id="KW-0663">Pyridoxal phosphate</keyword>
<keyword id="KW-0745">Spermidine biosynthesis</keyword>